<gene>
    <name evidence="1" type="primary">fbp</name>
    <name type="ordered locus">BDI_3671</name>
</gene>
<sequence length="666" mass="76678">MTKDIIAESVQNDLRYLQLLARSFPTIADASTEIINLEAILNLPKGTEHFLSDLHGEDQAFSHVLRNASGAVKRKVNEIFSNTLRESEKKELCSLIYYPEDKLELIKSQEQDLEDWYQVTLNQLVRVCRNVSSKYTRSKVRKALPKEFSYIIQELLHESSVEPNKSAYVDQIICTIISTGRADDFIIAMCNLIQRLTIDLLHIIGDIYDRGPGAHLIMDILCDYHNFDVQWGNHDILWMGAASGNLVSIANVIRMCLRFGNMATLEDGYGINLLPLATFAMEAYGDDPCALFMPKTKFADNAMDEKTTRLIAQMHKAITIIQFKLEGEIIRRRPEFEMDDRMLLHHIDLKRGVVHIDGKDYTLKDTNWPTLDPKDPYRLSIEEEDLIRKILHSFESSEKMKKHMRCFFRHGGMYQVCNSNLLFHASIPMNPDGTFKSVRILGQDYKGRALLDRVDQLIRTAYFKTGEQEEVEYAHDYIWYLWGGKDSPLFDKSKMATFERAFIEEAETHKEEKGAYYTLREQEEICDKILDEFGVTGMHRHIINGHVPVRSNQGENPIKANGKMLVIDGGFSRPYHLETGIAGYTLVYHSRGFQLVQHEPFESRAKAIEEGLDIKSTTIVVELSSHRQMVKDTDKGADLQSQIKDLEKLLYAYRNGLIKEKERMER</sequence>
<protein>
    <recommendedName>
        <fullName evidence="1">Fructose-1,6-bisphosphatase class 3</fullName>
        <shortName evidence="1">FBPase class 3</shortName>
        <ecNumber evidence="1">3.1.3.11</ecNumber>
    </recommendedName>
    <alternativeName>
        <fullName evidence="1">D-fructose-1,6-bisphosphate 1-phosphohydrolase class 3</fullName>
    </alternativeName>
</protein>
<keyword id="KW-0119">Carbohydrate metabolism</keyword>
<keyword id="KW-0378">Hydrolase</keyword>
<keyword id="KW-0464">Manganese</keyword>
<keyword id="KW-1185">Reference proteome</keyword>
<organism>
    <name type="scientific">Parabacteroides distasonis (strain ATCC 8503 / DSM 20701 / CIP 104284 / JCM 5825 / NCTC 11152)</name>
    <dbReference type="NCBI Taxonomy" id="435591"/>
    <lineage>
        <taxon>Bacteria</taxon>
        <taxon>Pseudomonadati</taxon>
        <taxon>Bacteroidota</taxon>
        <taxon>Bacteroidia</taxon>
        <taxon>Bacteroidales</taxon>
        <taxon>Tannerellaceae</taxon>
        <taxon>Parabacteroides</taxon>
    </lineage>
</organism>
<evidence type="ECO:0000255" key="1">
    <source>
        <dbReference type="HAMAP-Rule" id="MF_01854"/>
    </source>
</evidence>
<comment type="catalytic activity">
    <reaction evidence="1">
        <text>beta-D-fructose 1,6-bisphosphate + H2O = beta-D-fructose 6-phosphate + phosphate</text>
        <dbReference type="Rhea" id="RHEA:11064"/>
        <dbReference type="ChEBI" id="CHEBI:15377"/>
        <dbReference type="ChEBI" id="CHEBI:32966"/>
        <dbReference type="ChEBI" id="CHEBI:43474"/>
        <dbReference type="ChEBI" id="CHEBI:57634"/>
        <dbReference type="EC" id="3.1.3.11"/>
    </reaction>
</comment>
<comment type="cofactor">
    <cofactor evidence="1">
        <name>Mn(2+)</name>
        <dbReference type="ChEBI" id="CHEBI:29035"/>
    </cofactor>
</comment>
<comment type="pathway">
    <text evidence="1">Carbohydrate biosynthesis; gluconeogenesis.</text>
</comment>
<comment type="similarity">
    <text evidence="1">Belongs to the FBPase class 3 family.</text>
</comment>
<accession>A6LI52</accession>
<name>F16PC_PARD8</name>
<reference key="1">
    <citation type="journal article" date="2007" name="PLoS Biol.">
        <title>Evolution of symbiotic bacteria in the distal human intestine.</title>
        <authorList>
            <person name="Xu J."/>
            <person name="Mahowald M.A."/>
            <person name="Ley R.E."/>
            <person name="Lozupone C.A."/>
            <person name="Hamady M."/>
            <person name="Martens E.C."/>
            <person name="Henrissat B."/>
            <person name="Coutinho P.M."/>
            <person name="Minx P."/>
            <person name="Latreille P."/>
            <person name="Cordum H."/>
            <person name="Van Brunt A."/>
            <person name="Kim K."/>
            <person name="Fulton R.S."/>
            <person name="Fulton L.A."/>
            <person name="Clifton S.W."/>
            <person name="Wilson R.K."/>
            <person name="Knight R.D."/>
            <person name="Gordon J.I."/>
        </authorList>
    </citation>
    <scope>NUCLEOTIDE SEQUENCE [LARGE SCALE GENOMIC DNA]</scope>
    <source>
        <strain>ATCC 8503 / DSM 20701 / CIP 104284 / JCM 5825 / NCTC 11152</strain>
    </source>
</reference>
<dbReference type="EC" id="3.1.3.11" evidence="1"/>
<dbReference type="EMBL" id="CP000140">
    <property type="protein sequence ID" value="ABR45366.1"/>
    <property type="molecule type" value="Genomic_DNA"/>
</dbReference>
<dbReference type="RefSeq" id="WP_005859099.1">
    <property type="nucleotide sequence ID" value="NC_009615.1"/>
</dbReference>
<dbReference type="STRING" id="435591.BDI_3671"/>
<dbReference type="PaxDb" id="435591-BDI_3671"/>
<dbReference type="KEGG" id="pdi:BDI_3671"/>
<dbReference type="eggNOG" id="COG3855">
    <property type="taxonomic scope" value="Bacteria"/>
</dbReference>
<dbReference type="HOGENOM" id="CLU_028392_2_0_10"/>
<dbReference type="BioCyc" id="PDIS435591:G1G5A-3766-MONOMER"/>
<dbReference type="UniPathway" id="UPA00138"/>
<dbReference type="Proteomes" id="UP000000566">
    <property type="component" value="Chromosome"/>
</dbReference>
<dbReference type="GO" id="GO:0042132">
    <property type="term" value="F:fructose 1,6-bisphosphate 1-phosphatase activity"/>
    <property type="evidence" value="ECO:0007669"/>
    <property type="project" value="UniProtKB-UniRule"/>
</dbReference>
<dbReference type="GO" id="GO:0006094">
    <property type="term" value="P:gluconeogenesis"/>
    <property type="evidence" value="ECO:0007669"/>
    <property type="project" value="UniProtKB-UniRule"/>
</dbReference>
<dbReference type="HAMAP" id="MF_01854">
    <property type="entry name" value="FBPase_class3"/>
    <property type="match status" value="1"/>
</dbReference>
<dbReference type="InterPro" id="IPR009164">
    <property type="entry name" value="FBPtase_class3"/>
</dbReference>
<dbReference type="InterPro" id="IPR029052">
    <property type="entry name" value="Metallo-depent_PP-like"/>
</dbReference>
<dbReference type="Pfam" id="PF06874">
    <property type="entry name" value="FBPase_2"/>
    <property type="match status" value="1"/>
</dbReference>
<dbReference type="PIRSF" id="PIRSF000906">
    <property type="entry name" value="FBPtase_Bacill"/>
    <property type="match status" value="1"/>
</dbReference>
<dbReference type="SUPFAM" id="SSF56300">
    <property type="entry name" value="Metallo-dependent phosphatases"/>
    <property type="match status" value="1"/>
</dbReference>
<feature type="chain" id="PRO_0000363105" description="Fructose-1,6-bisphosphatase class 3">
    <location>
        <begin position="1"/>
        <end position="666"/>
    </location>
</feature>
<proteinExistence type="inferred from homology"/>